<evidence type="ECO:0000255" key="1"/>
<evidence type="ECO:0000255" key="2">
    <source>
        <dbReference type="PROSITE-ProRule" id="PRU00703"/>
    </source>
</evidence>
<evidence type="ECO:0000269" key="3">
    <source>
    </source>
</evidence>
<evidence type="ECO:0000305" key="4"/>
<evidence type="ECO:0007829" key="5">
    <source>
        <dbReference type="PDB" id="3SL7"/>
    </source>
</evidence>
<evidence type="ECO:0007829" key="6">
    <source>
        <dbReference type="PDB" id="4GQY"/>
    </source>
</evidence>
<keyword id="KW-0002">3D-structure</keyword>
<keyword id="KW-0129">CBS domain</keyword>
<keyword id="KW-0150">Chloroplast</keyword>
<keyword id="KW-0934">Plastid</keyword>
<keyword id="KW-1185">Reference proteome</keyword>
<keyword id="KW-0677">Repeat</keyword>
<keyword id="KW-0809">Transit peptide</keyword>
<feature type="transit peptide" description="Chloroplast" evidence="1">
    <location>
        <begin position="1"/>
        <end position="71"/>
    </location>
</feature>
<feature type="chain" id="PRO_0000403933" description="CBS domain-containing protein CBSX2, chloroplastic">
    <location>
        <begin position="72"/>
        <end position="238"/>
    </location>
</feature>
<feature type="domain" description="CBS 1" evidence="2">
    <location>
        <begin position="83"/>
        <end position="145"/>
    </location>
</feature>
<feature type="domain" description="CBS 2" evidence="2">
    <location>
        <begin position="177"/>
        <end position="234"/>
    </location>
</feature>
<feature type="helix" evidence="5">
    <location>
        <begin position="79"/>
        <end position="82"/>
    </location>
</feature>
<feature type="strand" evidence="5">
    <location>
        <begin position="83"/>
        <end position="85"/>
    </location>
</feature>
<feature type="helix" evidence="5">
    <location>
        <begin position="86"/>
        <end position="88"/>
    </location>
</feature>
<feature type="helix" evidence="5">
    <location>
        <begin position="98"/>
        <end position="108"/>
    </location>
</feature>
<feature type="strand" evidence="5">
    <location>
        <begin position="111"/>
        <end position="116"/>
    </location>
</feature>
<feature type="strand" evidence="5">
    <location>
        <begin position="121"/>
        <end position="127"/>
    </location>
</feature>
<feature type="helix" evidence="5">
    <location>
        <begin position="128"/>
        <end position="131"/>
    </location>
</feature>
<feature type="helix" evidence="6">
    <location>
        <begin position="135"/>
        <end position="138"/>
    </location>
</feature>
<feature type="helix" evidence="5">
    <location>
        <begin position="158"/>
        <end position="166"/>
    </location>
</feature>
<feature type="turn" evidence="5">
    <location>
        <begin position="167"/>
        <end position="170"/>
    </location>
</feature>
<feature type="helix" evidence="5">
    <location>
        <begin position="173"/>
        <end position="176"/>
    </location>
</feature>
<feature type="strand" evidence="5">
    <location>
        <begin position="177"/>
        <end position="180"/>
    </location>
</feature>
<feature type="helix" evidence="5">
    <location>
        <begin position="190"/>
        <end position="197"/>
    </location>
</feature>
<feature type="strand" evidence="5">
    <location>
        <begin position="204"/>
        <end position="208"/>
    </location>
</feature>
<feature type="strand" evidence="5">
    <location>
        <begin position="213"/>
        <end position="219"/>
    </location>
</feature>
<feature type="helix" evidence="5">
    <location>
        <begin position="220"/>
        <end position="232"/>
    </location>
</feature>
<dbReference type="EMBL" id="AL021961">
    <property type="protein sequence ID" value="CAA17560.1"/>
    <property type="status" value="ALT_SEQ"/>
    <property type="molecule type" value="Genomic_DNA"/>
</dbReference>
<dbReference type="EMBL" id="AL161584">
    <property type="protein sequence ID" value="CAB80129.1"/>
    <property type="status" value="ALT_SEQ"/>
    <property type="molecule type" value="Genomic_DNA"/>
</dbReference>
<dbReference type="EMBL" id="CP002687">
    <property type="protein sequence ID" value="AEE86326.1"/>
    <property type="molecule type" value="Genomic_DNA"/>
</dbReference>
<dbReference type="EMBL" id="AF360331">
    <property type="protein sequence ID" value="AAK26041.1"/>
    <property type="molecule type" value="mRNA"/>
</dbReference>
<dbReference type="EMBL" id="AY056339">
    <property type="protein sequence ID" value="AAL07188.1"/>
    <property type="molecule type" value="mRNA"/>
</dbReference>
<dbReference type="PIR" id="T05424">
    <property type="entry name" value="T05424"/>
</dbReference>
<dbReference type="PDB" id="3SL7">
    <property type="method" value="X-ray"/>
    <property type="resolution" value="1.90 A"/>
    <property type="chains" value="A/B=76-232"/>
</dbReference>
<dbReference type="PDB" id="4GQY">
    <property type="method" value="X-ray"/>
    <property type="resolution" value="2.19 A"/>
    <property type="chains" value="A/B/C/D=76-238"/>
</dbReference>
<dbReference type="PDBsum" id="3SL7"/>
<dbReference type="PDBsum" id="4GQY"/>
<dbReference type="SMR" id="Q9C5D0"/>
<dbReference type="BioGRID" id="14840">
    <property type="interactions" value="1"/>
</dbReference>
<dbReference type="FunCoup" id="Q9C5D0">
    <property type="interactions" value="256"/>
</dbReference>
<dbReference type="IntAct" id="Q9C5D0">
    <property type="interactions" value="1"/>
</dbReference>
<dbReference type="STRING" id="3702.Q9C5D0"/>
<dbReference type="PaxDb" id="3702-AT4G34120.1"/>
<dbReference type="ProteomicsDB" id="223886"/>
<dbReference type="EnsemblPlants" id="AT4G34120.1">
    <property type="protein sequence ID" value="AT4G34120.1"/>
    <property type="gene ID" value="AT4G34120"/>
</dbReference>
<dbReference type="GeneID" id="829558"/>
<dbReference type="Gramene" id="AT4G34120.1">
    <property type="protein sequence ID" value="AT4G34120.1"/>
    <property type="gene ID" value="AT4G34120"/>
</dbReference>
<dbReference type="KEGG" id="ath:AT4G34120"/>
<dbReference type="Araport" id="AT4G34120"/>
<dbReference type="TAIR" id="AT4G34120">
    <property type="gene designation" value="LEJ1"/>
</dbReference>
<dbReference type="eggNOG" id="ENOG502QTH1">
    <property type="taxonomic scope" value="Eukaryota"/>
</dbReference>
<dbReference type="HOGENOM" id="CLU_040681_4_0_1"/>
<dbReference type="InParanoid" id="Q9C5D0"/>
<dbReference type="OMA" id="FRRCLPQ"/>
<dbReference type="PhylomeDB" id="Q9C5D0"/>
<dbReference type="EvolutionaryTrace" id="Q9C5D0"/>
<dbReference type="PRO" id="PR:Q9C5D0"/>
<dbReference type="Proteomes" id="UP000006548">
    <property type="component" value="Chromosome 4"/>
</dbReference>
<dbReference type="ExpressionAtlas" id="Q9C5D0">
    <property type="expression patterns" value="baseline and differential"/>
</dbReference>
<dbReference type="GO" id="GO:0009507">
    <property type="term" value="C:chloroplast"/>
    <property type="evidence" value="ECO:0007005"/>
    <property type="project" value="TAIR"/>
</dbReference>
<dbReference type="GO" id="GO:0009570">
    <property type="term" value="C:chloroplast stroma"/>
    <property type="evidence" value="ECO:0007005"/>
    <property type="project" value="TAIR"/>
</dbReference>
<dbReference type="GO" id="GO:0005886">
    <property type="term" value="C:plasma membrane"/>
    <property type="evidence" value="ECO:0007005"/>
    <property type="project" value="TAIR"/>
</dbReference>
<dbReference type="GO" id="GO:0045454">
    <property type="term" value="P:cell redox homeostasis"/>
    <property type="evidence" value="ECO:0000314"/>
    <property type="project" value="TAIR"/>
</dbReference>
<dbReference type="CDD" id="cd17789">
    <property type="entry name" value="CBS_pair_plant_CBSX"/>
    <property type="match status" value="1"/>
</dbReference>
<dbReference type="FunFam" id="3.10.580.10:FF:000038">
    <property type="entry name" value="CBS domain-containing protein CBSX2, chloroplastic"/>
    <property type="match status" value="1"/>
</dbReference>
<dbReference type="Gene3D" id="3.10.580.10">
    <property type="entry name" value="CBS-domain"/>
    <property type="match status" value="1"/>
</dbReference>
<dbReference type="InterPro" id="IPR000644">
    <property type="entry name" value="CBS_dom"/>
</dbReference>
<dbReference type="InterPro" id="IPR046342">
    <property type="entry name" value="CBS_dom_sf"/>
</dbReference>
<dbReference type="InterPro" id="IPR051462">
    <property type="entry name" value="CBS_domain-containing"/>
</dbReference>
<dbReference type="PANTHER" id="PTHR48108">
    <property type="entry name" value="CBS DOMAIN-CONTAINING PROTEIN CBSX2, CHLOROPLASTIC"/>
    <property type="match status" value="1"/>
</dbReference>
<dbReference type="PANTHER" id="PTHR48108:SF24">
    <property type="entry name" value="CBS DOMAIN-CONTAINING PROTEIN CBSX2, CHLOROPLASTIC"/>
    <property type="match status" value="1"/>
</dbReference>
<dbReference type="Pfam" id="PF00571">
    <property type="entry name" value="CBS"/>
    <property type="match status" value="2"/>
</dbReference>
<dbReference type="SMART" id="SM00116">
    <property type="entry name" value="CBS"/>
    <property type="match status" value="2"/>
</dbReference>
<dbReference type="SUPFAM" id="SSF54631">
    <property type="entry name" value="CBS-domain pair"/>
    <property type="match status" value="1"/>
</dbReference>
<dbReference type="PROSITE" id="PS51371">
    <property type="entry name" value="CBS"/>
    <property type="match status" value="2"/>
</dbReference>
<organism>
    <name type="scientific">Arabidopsis thaliana</name>
    <name type="common">Mouse-ear cress</name>
    <dbReference type="NCBI Taxonomy" id="3702"/>
    <lineage>
        <taxon>Eukaryota</taxon>
        <taxon>Viridiplantae</taxon>
        <taxon>Streptophyta</taxon>
        <taxon>Embryophyta</taxon>
        <taxon>Tracheophyta</taxon>
        <taxon>Spermatophyta</taxon>
        <taxon>Magnoliopsida</taxon>
        <taxon>eudicotyledons</taxon>
        <taxon>Gunneridae</taxon>
        <taxon>Pentapetalae</taxon>
        <taxon>rosids</taxon>
        <taxon>malvids</taxon>
        <taxon>Brassicales</taxon>
        <taxon>Brassicaceae</taxon>
        <taxon>Camelineae</taxon>
        <taxon>Arabidopsis</taxon>
    </lineage>
</organism>
<proteinExistence type="evidence at protein level"/>
<protein>
    <recommendedName>
        <fullName>CBS domain-containing protein CBSX2, chloroplastic</fullName>
    </recommendedName>
    <alternativeName>
        <fullName>CBS domain-containing protein 1</fullName>
        <shortName>AtCDCP1</shortName>
    </alternativeName>
    <alternativeName>
        <fullName>Protein LOSS OF THE TIMING OF ET AND JA BIOSYNTHESIS 1</fullName>
        <shortName>AtLEJ1</shortName>
    </alternativeName>
</protein>
<accession>Q9C5D0</accession>
<accession>O49493</accession>
<reference key="1">
    <citation type="journal article" date="1999" name="Nature">
        <title>Sequence and analysis of chromosome 4 of the plant Arabidopsis thaliana.</title>
        <authorList>
            <person name="Mayer K.F.X."/>
            <person name="Schueller C."/>
            <person name="Wambutt R."/>
            <person name="Murphy G."/>
            <person name="Volckaert G."/>
            <person name="Pohl T."/>
            <person name="Duesterhoeft A."/>
            <person name="Stiekema W."/>
            <person name="Entian K.-D."/>
            <person name="Terryn N."/>
            <person name="Harris B."/>
            <person name="Ansorge W."/>
            <person name="Brandt P."/>
            <person name="Grivell L.A."/>
            <person name="Rieger M."/>
            <person name="Weichselgartner M."/>
            <person name="de Simone V."/>
            <person name="Obermaier B."/>
            <person name="Mache R."/>
            <person name="Mueller M."/>
            <person name="Kreis M."/>
            <person name="Delseny M."/>
            <person name="Puigdomenech P."/>
            <person name="Watson M."/>
            <person name="Schmidtheini T."/>
            <person name="Reichert B."/>
            <person name="Portetelle D."/>
            <person name="Perez-Alonso M."/>
            <person name="Boutry M."/>
            <person name="Bancroft I."/>
            <person name="Vos P."/>
            <person name="Hoheisel J."/>
            <person name="Zimmermann W."/>
            <person name="Wedler H."/>
            <person name="Ridley P."/>
            <person name="Langham S.-A."/>
            <person name="McCullagh B."/>
            <person name="Bilham L."/>
            <person name="Robben J."/>
            <person name="van der Schueren J."/>
            <person name="Grymonprez B."/>
            <person name="Chuang Y.-J."/>
            <person name="Vandenbussche F."/>
            <person name="Braeken M."/>
            <person name="Weltjens I."/>
            <person name="Voet M."/>
            <person name="Bastiaens I."/>
            <person name="Aert R."/>
            <person name="Defoor E."/>
            <person name="Weitzenegger T."/>
            <person name="Bothe G."/>
            <person name="Ramsperger U."/>
            <person name="Hilbert H."/>
            <person name="Braun M."/>
            <person name="Holzer E."/>
            <person name="Brandt A."/>
            <person name="Peters S."/>
            <person name="van Staveren M."/>
            <person name="Dirkse W."/>
            <person name="Mooijman P."/>
            <person name="Klein Lankhorst R."/>
            <person name="Rose M."/>
            <person name="Hauf J."/>
            <person name="Koetter P."/>
            <person name="Berneiser S."/>
            <person name="Hempel S."/>
            <person name="Feldpausch M."/>
            <person name="Lamberth S."/>
            <person name="Van den Daele H."/>
            <person name="De Keyser A."/>
            <person name="Buysshaert C."/>
            <person name="Gielen J."/>
            <person name="Villarroel R."/>
            <person name="De Clercq R."/>
            <person name="van Montagu M."/>
            <person name="Rogers J."/>
            <person name="Cronin A."/>
            <person name="Quail M.A."/>
            <person name="Bray-Allen S."/>
            <person name="Clark L."/>
            <person name="Doggett J."/>
            <person name="Hall S."/>
            <person name="Kay M."/>
            <person name="Lennard N."/>
            <person name="McLay K."/>
            <person name="Mayes R."/>
            <person name="Pettett A."/>
            <person name="Rajandream M.A."/>
            <person name="Lyne M."/>
            <person name="Benes V."/>
            <person name="Rechmann S."/>
            <person name="Borkova D."/>
            <person name="Bloecker H."/>
            <person name="Scharfe M."/>
            <person name="Grimm M."/>
            <person name="Loehnert T.-H."/>
            <person name="Dose S."/>
            <person name="de Haan M."/>
            <person name="Maarse A.C."/>
            <person name="Schaefer M."/>
            <person name="Mueller-Auer S."/>
            <person name="Gabel C."/>
            <person name="Fuchs M."/>
            <person name="Fartmann B."/>
            <person name="Granderath K."/>
            <person name="Dauner D."/>
            <person name="Herzl A."/>
            <person name="Neumann S."/>
            <person name="Argiriou A."/>
            <person name="Vitale D."/>
            <person name="Liguori R."/>
            <person name="Piravandi E."/>
            <person name="Massenet O."/>
            <person name="Quigley F."/>
            <person name="Clabauld G."/>
            <person name="Muendlein A."/>
            <person name="Felber R."/>
            <person name="Schnabl S."/>
            <person name="Hiller R."/>
            <person name="Schmidt W."/>
            <person name="Lecharny A."/>
            <person name="Aubourg S."/>
            <person name="Chefdor F."/>
            <person name="Cooke R."/>
            <person name="Berger C."/>
            <person name="Monfort A."/>
            <person name="Casacuberta E."/>
            <person name="Gibbons T."/>
            <person name="Weber N."/>
            <person name="Vandenbol M."/>
            <person name="Bargues M."/>
            <person name="Terol J."/>
            <person name="Torres A."/>
            <person name="Perez-Perez A."/>
            <person name="Purnelle B."/>
            <person name="Bent E."/>
            <person name="Johnson S."/>
            <person name="Tacon D."/>
            <person name="Jesse T."/>
            <person name="Heijnen L."/>
            <person name="Schwarz S."/>
            <person name="Scholler P."/>
            <person name="Heber S."/>
            <person name="Francs P."/>
            <person name="Bielke C."/>
            <person name="Frishman D."/>
            <person name="Haase D."/>
            <person name="Lemcke K."/>
            <person name="Mewes H.-W."/>
            <person name="Stocker S."/>
            <person name="Zaccaria P."/>
            <person name="Bevan M."/>
            <person name="Wilson R.K."/>
            <person name="de la Bastide M."/>
            <person name="Habermann K."/>
            <person name="Parnell L."/>
            <person name="Dedhia N."/>
            <person name="Gnoj L."/>
            <person name="Schutz K."/>
            <person name="Huang E."/>
            <person name="Spiegel L."/>
            <person name="Sekhon M."/>
            <person name="Murray J."/>
            <person name="Sheet P."/>
            <person name="Cordes M."/>
            <person name="Abu-Threideh J."/>
            <person name="Stoneking T."/>
            <person name="Kalicki J."/>
            <person name="Graves T."/>
            <person name="Harmon G."/>
            <person name="Edwards J."/>
            <person name="Latreille P."/>
            <person name="Courtney L."/>
            <person name="Cloud J."/>
            <person name="Abbott A."/>
            <person name="Scott K."/>
            <person name="Johnson D."/>
            <person name="Minx P."/>
            <person name="Bentley D."/>
            <person name="Fulton B."/>
            <person name="Miller N."/>
            <person name="Greco T."/>
            <person name="Kemp K."/>
            <person name="Kramer J."/>
            <person name="Fulton L."/>
            <person name="Mardis E."/>
            <person name="Dante M."/>
            <person name="Pepin K."/>
            <person name="Hillier L.W."/>
            <person name="Nelson J."/>
            <person name="Spieth J."/>
            <person name="Ryan E."/>
            <person name="Andrews S."/>
            <person name="Geisel C."/>
            <person name="Layman D."/>
            <person name="Du H."/>
            <person name="Ali J."/>
            <person name="Berghoff A."/>
            <person name="Jones K."/>
            <person name="Drone K."/>
            <person name="Cotton M."/>
            <person name="Joshu C."/>
            <person name="Antonoiu B."/>
            <person name="Zidanic M."/>
            <person name="Strong C."/>
            <person name="Sun H."/>
            <person name="Lamar B."/>
            <person name="Yordan C."/>
            <person name="Ma P."/>
            <person name="Zhong J."/>
            <person name="Preston R."/>
            <person name="Vil D."/>
            <person name="Shekher M."/>
            <person name="Matero A."/>
            <person name="Shah R."/>
            <person name="Swaby I.K."/>
            <person name="O'Shaughnessy A."/>
            <person name="Rodriguez M."/>
            <person name="Hoffman J."/>
            <person name="Till S."/>
            <person name="Granat S."/>
            <person name="Shohdy N."/>
            <person name="Hasegawa A."/>
            <person name="Hameed A."/>
            <person name="Lodhi M."/>
            <person name="Johnson A."/>
            <person name="Chen E."/>
            <person name="Marra M.A."/>
            <person name="Martienssen R."/>
            <person name="McCombie W.R."/>
        </authorList>
    </citation>
    <scope>NUCLEOTIDE SEQUENCE [LARGE SCALE GENOMIC DNA]</scope>
    <source>
        <strain>cv. Columbia</strain>
    </source>
</reference>
<reference key="2">
    <citation type="journal article" date="2017" name="Plant J.">
        <title>Araport11: a complete reannotation of the Arabidopsis thaliana reference genome.</title>
        <authorList>
            <person name="Cheng C.Y."/>
            <person name="Krishnakumar V."/>
            <person name="Chan A.P."/>
            <person name="Thibaud-Nissen F."/>
            <person name="Schobel S."/>
            <person name="Town C.D."/>
        </authorList>
    </citation>
    <scope>GENOME REANNOTATION</scope>
    <source>
        <strain>cv. Columbia</strain>
    </source>
</reference>
<reference key="3">
    <citation type="journal article" date="2003" name="Science">
        <title>Empirical analysis of transcriptional activity in the Arabidopsis genome.</title>
        <authorList>
            <person name="Yamada K."/>
            <person name="Lim J."/>
            <person name="Dale J.M."/>
            <person name="Chen H."/>
            <person name="Shinn P."/>
            <person name="Palm C.J."/>
            <person name="Southwick A.M."/>
            <person name="Wu H.C."/>
            <person name="Kim C.J."/>
            <person name="Nguyen M."/>
            <person name="Pham P.K."/>
            <person name="Cheuk R.F."/>
            <person name="Karlin-Newmann G."/>
            <person name="Liu S.X."/>
            <person name="Lam B."/>
            <person name="Sakano H."/>
            <person name="Wu T."/>
            <person name="Yu G."/>
            <person name="Miranda M."/>
            <person name="Quach H.L."/>
            <person name="Tripp M."/>
            <person name="Chang C.H."/>
            <person name="Lee J.M."/>
            <person name="Toriumi M.J."/>
            <person name="Chan M.M."/>
            <person name="Tang C.C."/>
            <person name="Onodera C.S."/>
            <person name="Deng J.M."/>
            <person name="Akiyama K."/>
            <person name="Ansari Y."/>
            <person name="Arakawa T."/>
            <person name="Banh J."/>
            <person name="Banno F."/>
            <person name="Bowser L."/>
            <person name="Brooks S.Y."/>
            <person name="Carninci P."/>
            <person name="Chao Q."/>
            <person name="Choy N."/>
            <person name="Enju A."/>
            <person name="Goldsmith A.D."/>
            <person name="Gurjal M."/>
            <person name="Hansen N.F."/>
            <person name="Hayashizaki Y."/>
            <person name="Johnson-Hopson C."/>
            <person name="Hsuan V.W."/>
            <person name="Iida K."/>
            <person name="Karnes M."/>
            <person name="Khan S."/>
            <person name="Koesema E."/>
            <person name="Ishida J."/>
            <person name="Jiang P.X."/>
            <person name="Jones T."/>
            <person name="Kawai J."/>
            <person name="Kamiya A."/>
            <person name="Meyers C."/>
            <person name="Nakajima M."/>
            <person name="Narusaka M."/>
            <person name="Seki M."/>
            <person name="Sakurai T."/>
            <person name="Satou M."/>
            <person name="Tamse R."/>
            <person name="Vaysberg M."/>
            <person name="Wallender E.K."/>
            <person name="Wong C."/>
            <person name="Yamamura Y."/>
            <person name="Yuan S."/>
            <person name="Shinozaki K."/>
            <person name="Davis R.W."/>
            <person name="Theologis A."/>
            <person name="Ecker J.R."/>
        </authorList>
    </citation>
    <scope>NUCLEOTIDE SEQUENCE [LARGE SCALE MRNA]</scope>
    <source>
        <strain>cv. Columbia</strain>
    </source>
</reference>
<reference key="4">
    <citation type="journal article" date="2008" name="Plant Physiol.">
        <title>Quantitative proteomics of a chloroplast SRP54 sorting mutant and its genetic interactions with CLPC1 in Arabidopsis.</title>
        <authorList>
            <person name="Rutschow H."/>
            <person name="Ytterberg A.J."/>
            <person name="Friso G."/>
            <person name="Nilsson R."/>
            <person name="van Wijk K.J."/>
        </authorList>
    </citation>
    <scope>SUBCELLULAR LOCATION</scope>
</reference>
<reference key="5">
    <citation type="journal article" date="2009" name="BMC Genomics">
        <title>Genome wide expression analysis of CBS domain containing proteins in Arabidopsis thaliana (L.) Heynh and Oryza sativa L. reveals their developmental and stress regulation.</title>
        <authorList>
            <person name="Kushwaha H.R."/>
            <person name="Singh A.K."/>
            <person name="Sopory S.K."/>
            <person name="Singla-Pareek S.L."/>
            <person name="Pareek A."/>
        </authorList>
    </citation>
    <scope>GENE FAMILY</scope>
    <scope>NOMENCLATURE</scope>
</reference>
<name>CBSX2_ARATH</name>
<sequence>MGSISLSNSMPITRLPLLTSLYHQSFLPISSSSFSLLPLSNRRRSSTFSPSITVSAFFAAPASVNNNNSVPAKNGGYTVGDFMTPRQNLHVVKPSTSVDDALELLVEKKVTGLPVIDDNWTLVGVVSDYDLLALDSISGRSQNDTNLFPDVDSTWKTFNELQKLISKTYGKVVGDLMTPSPLVVRDSTNLEDAARLLLETKFRRLPVVDADGKLIGILTRGNVVRAALQIKRETENST</sequence>
<gene>
    <name type="primary">CBSX2</name>
    <name type="synonym">CDCP1</name>
    <name type="ordered locus">At4g34120</name>
    <name type="ORF">F28A23.120</name>
</gene>
<comment type="subcellular location">
    <subcellularLocation>
        <location evidence="3">Plastid</location>
        <location evidence="3">Chloroplast stroma</location>
    </subcellularLocation>
</comment>
<comment type="sequence caution" evidence="4">
    <conflict type="erroneous gene model prediction">
        <sequence resource="EMBL-CDS" id="CAA17560"/>
    </conflict>
</comment>
<comment type="sequence caution" evidence="4">
    <conflict type="erroneous gene model prediction">
        <sequence resource="EMBL-CDS" id="CAB80129"/>
    </conflict>
</comment>